<organism>
    <name type="scientific">Campylobacter concisus (strain 13826)</name>
    <dbReference type="NCBI Taxonomy" id="360104"/>
    <lineage>
        <taxon>Bacteria</taxon>
        <taxon>Pseudomonadati</taxon>
        <taxon>Campylobacterota</taxon>
        <taxon>Epsilonproteobacteria</taxon>
        <taxon>Campylobacterales</taxon>
        <taxon>Campylobacteraceae</taxon>
        <taxon>Campylobacter</taxon>
    </lineage>
</organism>
<sequence>MSNVRISEIANELGYPSKEIVEKAQELGLKVKTHSNAVSLEEAEAIYEYVQTGVIPDKFKKKKSEPKAKKEPKKETEKEPAKKEEKPKTEPKKAATKAEPKPEKAKAEPKKEAQISEEKPKTEPKKEEPVKVEQKPAEAPKPKESLADVTQKRRGLVIVKKKKDYEAPAPIKEEKKAEAAVTNISDFKSMFSASDENLARKKKKEKKVTVVSKKDSAEKMDLLGGSDFGDIVLEDEDVVVLPDFSFKTPAPTPMQRTKQPNAMKTTVNNTINSFGEGGIQRRARKKHKKPENKQNSEAVTSINIPKEIRVYEFAEKLNKQPSEVIGKLFMLGMMTTKNDFLDEDAIEILADEFNVEVNIIDDQKEFDYVAAYEEEIKDDENLQPRAPVITIMGHVDHGKTSLLDYIRKSRVAAGEAGGITQHVGAYMVNKNGRNITFIDTPGHEAFTAMRARGAGVTDIVIIVVAADDGVKPQTKEAVSHAKAAGVPIIIAINKMDKESANPDLVKTGLAELDIMPTEWGGKYEFVPISAKTGMGIDDLLEIVLLQADLLELKANPKANAKATVIESSLQKGRGPVATIIVENGTLHVGDTVVAGVAYGKIRSLLDDQGRSLREIKPGECGVIVGLSEIAEAGETLIGVKTDKEAREYAQKKAEYIRQKELSKSTKVSIDELSAKIAEGELKTLPVIIKADVGGSLEALKASLEKLANDEIRVNVIHSGVGGITQSDVALASASNDCIILGFNIRPTGEIKEKAKESGVEIKTYNVIYNLIDDVKAILGGLMSPIIREEQLGQAQVRQVIHVPKVGTIAGCIVTEGTINRGAKIRLIREGVVVYEGLVSSLKRFKDDVKEVAKGYECGVGIENFNDIRENDYIESFKEVKEKATL</sequence>
<gene>
    <name evidence="2" type="primary">infB</name>
    <name type="ordered locus">Ccon26_04760</name>
    <name type="ORF">CCC13826_1495</name>
</gene>
<feature type="chain" id="PRO_1000008219" description="Translation initiation factor IF-2">
    <location>
        <begin position="1"/>
        <end position="885"/>
    </location>
</feature>
<feature type="domain" description="tr-type G">
    <location>
        <begin position="384"/>
        <end position="553"/>
    </location>
</feature>
<feature type="region of interest" description="Disordered" evidence="3">
    <location>
        <begin position="55"/>
        <end position="150"/>
    </location>
</feature>
<feature type="region of interest" description="Disordered" evidence="3">
    <location>
        <begin position="269"/>
        <end position="300"/>
    </location>
</feature>
<feature type="region of interest" description="G1" evidence="1">
    <location>
        <begin position="393"/>
        <end position="400"/>
    </location>
</feature>
<feature type="region of interest" description="G2" evidence="1">
    <location>
        <begin position="418"/>
        <end position="422"/>
    </location>
</feature>
<feature type="region of interest" description="G3" evidence="1">
    <location>
        <begin position="439"/>
        <end position="442"/>
    </location>
</feature>
<feature type="region of interest" description="G4" evidence="1">
    <location>
        <begin position="493"/>
        <end position="496"/>
    </location>
</feature>
<feature type="region of interest" description="G5" evidence="1">
    <location>
        <begin position="529"/>
        <end position="531"/>
    </location>
</feature>
<feature type="compositionally biased region" description="Basic and acidic residues" evidence="3">
    <location>
        <begin position="65"/>
        <end position="146"/>
    </location>
</feature>
<feature type="compositionally biased region" description="Basic residues" evidence="3">
    <location>
        <begin position="281"/>
        <end position="290"/>
    </location>
</feature>
<feature type="binding site" evidence="2">
    <location>
        <begin position="393"/>
        <end position="400"/>
    </location>
    <ligand>
        <name>GTP</name>
        <dbReference type="ChEBI" id="CHEBI:37565"/>
    </ligand>
</feature>
<feature type="binding site" evidence="2">
    <location>
        <begin position="439"/>
        <end position="443"/>
    </location>
    <ligand>
        <name>GTP</name>
        <dbReference type="ChEBI" id="CHEBI:37565"/>
    </ligand>
</feature>
<feature type="binding site" evidence="2">
    <location>
        <begin position="493"/>
        <end position="496"/>
    </location>
    <ligand>
        <name>GTP</name>
        <dbReference type="ChEBI" id="CHEBI:37565"/>
    </ligand>
</feature>
<evidence type="ECO:0000250" key="1"/>
<evidence type="ECO:0000255" key="2">
    <source>
        <dbReference type="HAMAP-Rule" id="MF_00100"/>
    </source>
</evidence>
<evidence type="ECO:0000256" key="3">
    <source>
        <dbReference type="SAM" id="MobiDB-lite"/>
    </source>
</evidence>
<comment type="function">
    <text evidence="2">One of the essential components for the initiation of protein synthesis. Protects formylmethionyl-tRNA from spontaneous hydrolysis and promotes its binding to the 30S ribosomal subunits. Also involved in the hydrolysis of GTP during the formation of the 70S ribosomal complex.</text>
</comment>
<comment type="subcellular location">
    <subcellularLocation>
        <location evidence="2">Cytoplasm</location>
    </subcellularLocation>
</comment>
<comment type="similarity">
    <text evidence="2">Belongs to the TRAFAC class translation factor GTPase superfamily. Classic translation factor GTPase family. IF-2 subfamily.</text>
</comment>
<protein>
    <recommendedName>
        <fullName evidence="2">Translation initiation factor IF-2</fullName>
    </recommendedName>
</protein>
<accession>A7ZC69</accession>
<name>IF2_CAMC1</name>
<proteinExistence type="inferred from homology"/>
<keyword id="KW-0963">Cytoplasm</keyword>
<keyword id="KW-0342">GTP-binding</keyword>
<keyword id="KW-0396">Initiation factor</keyword>
<keyword id="KW-0547">Nucleotide-binding</keyword>
<keyword id="KW-0648">Protein biosynthesis</keyword>
<dbReference type="EMBL" id="CP000792">
    <property type="protein sequence ID" value="EAT99040.1"/>
    <property type="molecule type" value="Genomic_DNA"/>
</dbReference>
<dbReference type="RefSeq" id="WP_012001357.1">
    <property type="nucleotide sequence ID" value="NC_009802.2"/>
</dbReference>
<dbReference type="SMR" id="A7ZC69"/>
<dbReference type="STRING" id="360104.CCC13826_1495"/>
<dbReference type="KEGG" id="cco:CCC13826_1495"/>
<dbReference type="eggNOG" id="COG0532">
    <property type="taxonomic scope" value="Bacteria"/>
</dbReference>
<dbReference type="HOGENOM" id="CLU_006301_4_1_7"/>
<dbReference type="OrthoDB" id="9811804at2"/>
<dbReference type="Proteomes" id="UP000001121">
    <property type="component" value="Chromosome"/>
</dbReference>
<dbReference type="GO" id="GO:0005829">
    <property type="term" value="C:cytosol"/>
    <property type="evidence" value="ECO:0007669"/>
    <property type="project" value="TreeGrafter"/>
</dbReference>
<dbReference type="GO" id="GO:0005525">
    <property type="term" value="F:GTP binding"/>
    <property type="evidence" value="ECO:0007669"/>
    <property type="project" value="UniProtKB-KW"/>
</dbReference>
<dbReference type="GO" id="GO:0003924">
    <property type="term" value="F:GTPase activity"/>
    <property type="evidence" value="ECO:0007669"/>
    <property type="project" value="UniProtKB-UniRule"/>
</dbReference>
<dbReference type="GO" id="GO:0003743">
    <property type="term" value="F:translation initiation factor activity"/>
    <property type="evidence" value="ECO:0007669"/>
    <property type="project" value="UniProtKB-UniRule"/>
</dbReference>
<dbReference type="CDD" id="cd01887">
    <property type="entry name" value="IF2_eIF5B"/>
    <property type="match status" value="1"/>
</dbReference>
<dbReference type="CDD" id="cd03702">
    <property type="entry name" value="IF2_mtIF2_II"/>
    <property type="match status" value="1"/>
</dbReference>
<dbReference type="CDD" id="cd03692">
    <property type="entry name" value="mtIF2_IVc"/>
    <property type="match status" value="1"/>
</dbReference>
<dbReference type="FunFam" id="2.40.30.10:FF:000008">
    <property type="entry name" value="Translation initiation factor IF-2"/>
    <property type="match status" value="1"/>
</dbReference>
<dbReference type="FunFam" id="2.40.30.10:FF:000054">
    <property type="entry name" value="Translation initiation factor IF-2"/>
    <property type="match status" value="1"/>
</dbReference>
<dbReference type="FunFam" id="3.40.50.10050:FF:000001">
    <property type="entry name" value="Translation initiation factor IF-2"/>
    <property type="match status" value="1"/>
</dbReference>
<dbReference type="FunFam" id="3.40.50.300:FF:000019">
    <property type="entry name" value="Translation initiation factor IF-2"/>
    <property type="match status" value="1"/>
</dbReference>
<dbReference type="Gene3D" id="1.10.10.2480">
    <property type="match status" value="1"/>
</dbReference>
<dbReference type="Gene3D" id="3.40.50.300">
    <property type="entry name" value="P-loop containing nucleotide triphosphate hydrolases"/>
    <property type="match status" value="1"/>
</dbReference>
<dbReference type="Gene3D" id="2.40.30.10">
    <property type="entry name" value="Translation factors"/>
    <property type="match status" value="2"/>
</dbReference>
<dbReference type="Gene3D" id="3.40.50.10050">
    <property type="entry name" value="Translation initiation factor IF- 2, domain 3"/>
    <property type="match status" value="1"/>
</dbReference>
<dbReference type="HAMAP" id="MF_00100_B">
    <property type="entry name" value="IF_2_B"/>
    <property type="match status" value="1"/>
</dbReference>
<dbReference type="InterPro" id="IPR053905">
    <property type="entry name" value="EF-G-like_DII"/>
</dbReference>
<dbReference type="InterPro" id="IPR044145">
    <property type="entry name" value="IF2_II"/>
</dbReference>
<dbReference type="InterPro" id="IPR006847">
    <property type="entry name" value="IF2_N"/>
</dbReference>
<dbReference type="InterPro" id="IPR027417">
    <property type="entry name" value="P-loop_NTPase"/>
</dbReference>
<dbReference type="InterPro" id="IPR005225">
    <property type="entry name" value="Small_GTP-bd"/>
</dbReference>
<dbReference type="InterPro" id="IPR000795">
    <property type="entry name" value="T_Tr_GTP-bd_dom"/>
</dbReference>
<dbReference type="InterPro" id="IPR000178">
    <property type="entry name" value="TF_IF2_bacterial-like"/>
</dbReference>
<dbReference type="InterPro" id="IPR015760">
    <property type="entry name" value="TIF_IF2"/>
</dbReference>
<dbReference type="InterPro" id="IPR023115">
    <property type="entry name" value="TIF_IF2_dom3"/>
</dbReference>
<dbReference type="InterPro" id="IPR036925">
    <property type="entry name" value="TIF_IF2_dom3_sf"/>
</dbReference>
<dbReference type="InterPro" id="IPR009000">
    <property type="entry name" value="Transl_B-barrel_sf"/>
</dbReference>
<dbReference type="NCBIfam" id="TIGR00487">
    <property type="entry name" value="IF-2"/>
    <property type="match status" value="1"/>
</dbReference>
<dbReference type="NCBIfam" id="TIGR00231">
    <property type="entry name" value="small_GTP"/>
    <property type="match status" value="1"/>
</dbReference>
<dbReference type="PANTHER" id="PTHR43381:SF5">
    <property type="entry name" value="TR-TYPE G DOMAIN-CONTAINING PROTEIN"/>
    <property type="match status" value="1"/>
</dbReference>
<dbReference type="PANTHER" id="PTHR43381">
    <property type="entry name" value="TRANSLATION INITIATION FACTOR IF-2-RELATED"/>
    <property type="match status" value="1"/>
</dbReference>
<dbReference type="Pfam" id="PF22042">
    <property type="entry name" value="EF-G_D2"/>
    <property type="match status" value="1"/>
</dbReference>
<dbReference type="Pfam" id="PF00009">
    <property type="entry name" value="GTP_EFTU"/>
    <property type="match status" value="1"/>
</dbReference>
<dbReference type="Pfam" id="PF11987">
    <property type="entry name" value="IF-2"/>
    <property type="match status" value="1"/>
</dbReference>
<dbReference type="Pfam" id="PF04760">
    <property type="entry name" value="IF2_N"/>
    <property type="match status" value="2"/>
</dbReference>
<dbReference type="SUPFAM" id="SSF52156">
    <property type="entry name" value="Initiation factor IF2/eIF5b, domain 3"/>
    <property type="match status" value="1"/>
</dbReference>
<dbReference type="SUPFAM" id="SSF52540">
    <property type="entry name" value="P-loop containing nucleoside triphosphate hydrolases"/>
    <property type="match status" value="1"/>
</dbReference>
<dbReference type="SUPFAM" id="SSF50447">
    <property type="entry name" value="Translation proteins"/>
    <property type="match status" value="2"/>
</dbReference>
<dbReference type="PROSITE" id="PS51722">
    <property type="entry name" value="G_TR_2"/>
    <property type="match status" value="1"/>
</dbReference>
<dbReference type="PROSITE" id="PS01176">
    <property type="entry name" value="IF2"/>
    <property type="match status" value="1"/>
</dbReference>
<reference key="1">
    <citation type="submission" date="2007-10" db="EMBL/GenBank/DDBJ databases">
        <title>Genome sequence of Campylobacter concisus 13826 isolated from human feces.</title>
        <authorList>
            <person name="Fouts D.E."/>
            <person name="Mongodin E.F."/>
            <person name="Puiu D."/>
            <person name="Sebastian Y."/>
            <person name="Miller W.G."/>
            <person name="Mandrell R.E."/>
            <person name="On S."/>
            <person name="Nelson K.E."/>
        </authorList>
    </citation>
    <scope>NUCLEOTIDE SEQUENCE [LARGE SCALE GENOMIC DNA]</scope>
    <source>
        <strain>13826</strain>
    </source>
</reference>